<dbReference type="EC" id="3.4.22.46" evidence="4"/>
<dbReference type="EC" id="3.6.1.15" evidence="4"/>
<dbReference type="EC" id="3.4.22.28"/>
<dbReference type="EC" id="2.7.7.48" evidence="4"/>
<dbReference type="EMBL" id="AY593781">
    <property type="protein sequence ID" value="AAT01724.1"/>
    <property type="molecule type" value="Genomic_RNA"/>
</dbReference>
<dbReference type="EMBL" id="V01135">
    <property type="protein sequence ID" value="CAA24365.1"/>
    <property type="status" value="ALT_INIT"/>
    <property type="molecule type" value="Genomic_RNA"/>
</dbReference>
<dbReference type="EMBL" id="V01135">
    <property type="protein sequence ID" value="CAA24366.1"/>
    <property type="status" value="ALT_SEQ"/>
    <property type="molecule type" value="Genomic_RNA"/>
</dbReference>
<dbReference type="PIR" id="A03909">
    <property type="entry name" value="A03909"/>
</dbReference>
<dbReference type="PDB" id="7FEJ">
    <property type="method" value="EM"/>
    <property type="resolution" value="3.91 A"/>
    <property type="chains" value="4=202-286"/>
</dbReference>
<dbReference type="PDBsum" id="7FEJ"/>
<dbReference type="SMR" id="P03307"/>
<dbReference type="MEROPS" id="C28.001"/>
<dbReference type="Proteomes" id="UP000012669">
    <property type="component" value="Genome"/>
</dbReference>
<dbReference type="GO" id="GO:0044162">
    <property type="term" value="C:host cell cytoplasmic vesicle membrane"/>
    <property type="evidence" value="ECO:0007669"/>
    <property type="project" value="UniProtKB-SubCell"/>
</dbReference>
<dbReference type="GO" id="GO:0044167">
    <property type="term" value="C:host cell endoplasmic reticulum membrane"/>
    <property type="evidence" value="ECO:0007669"/>
    <property type="project" value="UniProtKB-SubCell"/>
</dbReference>
<dbReference type="GO" id="GO:0042025">
    <property type="term" value="C:host cell nucleus"/>
    <property type="evidence" value="ECO:0007669"/>
    <property type="project" value="UniProtKB-SubCell"/>
</dbReference>
<dbReference type="GO" id="GO:0016020">
    <property type="term" value="C:membrane"/>
    <property type="evidence" value="ECO:0007669"/>
    <property type="project" value="UniProtKB-KW"/>
</dbReference>
<dbReference type="GO" id="GO:0039618">
    <property type="term" value="C:T=pseudo3 icosahedral viral capsid"/>
    <property type="evidence" value="ECO:0007669"/>
    <property type="project" value="UniProtKB-KW"/>
</dbReference>
<dbReference type="GO" id="GO:0005524">
    <property type="term" value="F:ATP binding"/>
    <property type="evidence" value="ECO:0007669"/>
    <property type="project" value="UniProtKB-KW"/>
</dbReference>
<dbReference type="GO" id="GO:0015267">
    <property type="term" value="F:channel activity"/>
    <property type="evidence" value="ECO:0007669"/>
    <property type="project" value="UniProtKB-KW"/>
</dbReference>
<dbReference type="GO" id="GO:0004197">
    <property type="term" value="F:cysteine-type endopeptidase activity"/>
    <property type="evidence" value="ECO:0007669"/>
    <property type="project" value="UniProtKB-EC"/>
</dbReference>
<dbReference type="GO" id="GO:0017111">
    <property type="term" value="F:ribonucleoside triphosphate phosphatase activity"/>
    <property type="evidence" value="ECO:0007669"/>
    <property type="project" value="UniProtKB-EC"/>
</dbReference>
<dbReference type="GO" id="GO:0003723">
    <property type="term" value="F:RNA binding"/>
    <property type="evidence" value="ECO:0007669"/>
    <property type="project" value="UniProtKB-KW"/>
</dbReference>
<dbReference type="GO" id="GO:0003724">
    <property type="term" value="F:RNA helicase activity"/>
    <property type="evidence" value="ECO:0007669"/>
    <property type="project" value="InterPro"/>
</dbReference>
<dbReference type="GO" id="GO:0003968">
    <property type="term" value="F:RNA-directed RNA polymerase activity"/>
    <property type="evidence" value="ECO:0007669"/>
    <property type="project" value="UniProtKB-KW"/>
</dbReference>
<dbReference type="GO" id="GO:0005198">
    <property type="term" value="F:structural molecule activity"/>
    <property type="evidence" value="ECO:0007669"/>
    <property type="project" value="InterPro"/>
</dbReference>
<dbReference type="GO" id="GO:0075512">
    <property type="term" value="P:clathrin-dependent endocytosis of virus by host cell"/>
    <property type="evidence" value="ECO:0007669"/>
    <property type="project" value="UniProtKB-KW"/>
</dbReference>
<dbReference type="GO" id="GO:0006351">
    <property type="term" value="P:DNA-templated transcription"/>
    <property type="evidence" value="ECO:0007669"/>
    <property type="project" value="InterPro"/>
</dbReference>
<dbReference type="GO" id="GO:0034220">
    <property type="term" value="P:monoatomic ion transmembrane transport"/>
    <property type="evidence" value="ECO:0007669"/>
    <property type="project" value="UniProtKB-KW"/>
</dbReference>
<dbReference type="GO" id="GO:0006508">
    <property type="term" value="P:proteolysis"/>
    <property type="evidence" value="ECO:0007669"/>
    <property type="project" value="UniProtKB-KW"/>
</dbReference>
<dbReference type="GO" id="GO:0006417">
    <property type="term" value="P:regulation of translation"/>
    <property type="evidence" value="ECO:0007669"/>
    <property type="project" value="UniProtKB-KW"/>
</dbReference>
<dbReference type="GO" id="GO:0039520">
    <property type="term" value="P:symbiont-mediated activation of host autophagy"/>
    <property type="evidence" value="ECO:0000250"/>
    <property type="project" value="UniProtKB"/>
</dbReference>
<dbReference type="GO" id="GO:0039525">
    <property type="term" value="P:symbiont-mediated perturbation of host chromatin organization"/>
    <property type="evidence" value="ECO:0007669"/>
    <property type="project" value="UniProtKB-KW"/>
</dbReference>
<dbReference type="GO" id="GO:0019082">
    <property type="term" value="P:viral protein processing"/>
    <property type="evidence" value="ECO:0007669"/>
    <property type="project" value="InterPro"/>
</dbReference>
<dbReference type="GO" id="GO:0039694">
    <property type="term" value="P:viral RNA genome replication"/>
    <property type="evidence" value="ECO:0007669"/>
    <property type="project" value="InterPro"/>
</dbReference>
<dbReference type="GO" id="GO:0019062">
    <property type="term" value="P:virion attachment to host cell"/>
    <property type="evidence" value="ECO:0007669"/>
    <property type="project" value="UniProtKB-KW"/>
</dbReference>
<dbReference type="CDD" id="cd23210">
    <property type="entry name" value="Aphthovirus_RdRp"/>
    <property type="match status" value="1"/>
</dbReference>
<dbReference type="CDD" id="cd00205">
    <property type="entry name" value="rhv_like"/>
    <property type="match status" value="3"/>
</dbReference>
<dbReference type="FunFam" id="1.20.960.20:FF:000002">
    <property type="entry name" value="Genome polyprotein"/>
    <property type="match status" value="1"/>
</dbReference>
<dbReference type="FunFam" id="2.40.10.10:FF:000108">
    <property type="entry name" value="Genome polyprotein"/>
    <property type="match status" value="1"/>
</dbReference>
<dbReference type="FunFam" id="2.60.120.20:FF:000005">
    <property type="entry name" value="Genome polyprotein"/>
    <property type="match status" value="1"/>
</dbReference>
<dbReference type="FunFam" id="2.60.120.20:FF:000006">
    <property type="entry name" value="Genome polyprotein"/>
    <property type="match status" value="1"/>
</dbReference>
<dbReference type="FunFam" id="3.30.70.270:FF:000031">
    <property type="entry name" value="Genome polyprotein"/>
    <property type="match status" value="1"/>
</dbReference>
<dbReference type="Gene3D" id="1.20.960.20">
    <property type="match status" value="1"/>
</dbReference>
<dbReference type="Gene3D" id="2.60.120.20">
    <property type="match status" value="3"/>
</dbReference>
<dbReference type="Gene3D" id="3.30.70.270">
    <property type="match status" value="2"/>
</dbReference>
<dbReference type="Gene3D" id="4.10.90.10">
    <property type="entry name" value="Capsid protein VP4 superfamily, Picornavirus"/>
    <property type="match status" value="1"/>
</dbReference>
<dbReference type="Gene3D" id="3.90.70.10">
    <property type="entry name" value="Cysteine proteinases"/>
    <property type="match status" value="1"/>
</dbReference>
<dbReference type="Gene3D" id="2.40.10.10">
    <property type="entry name" value="Trypsin-like serine proteases"/>
    <property type="match status" value="2"/>
</dbReference>
<dbReference type="InterPro" id="IPR015031">
    <property type="entry name" value="Capsid_VP4_Picornavir"/>
</dbReference>
<dbReference type="InterPro" id="IPR037080">
    <property type="entry name" value="Capsid_VP4_sf_Picornavirus"/>
</dbReference>
<dbReference type="InterPro" id="IPR043502">
    <property type="entry name" value="DNA/RNA_pol_sf"/>
</dbReference>
<dbReference type="InterPro" id="IPR004080">
    <property type="entry name" value="FMDV_VP1_coat"/>
</dbReference>
<dbReference type="InterPro" id="IPR004004">
    <property type="entry name" value="Helic/Pol/Pept_Calicivir-typ"/>
</dbReference>
<dbReference type="InterPro" id="IPR000605">
    <property type="entry name" value="Helicase_SF3_ssDNA/RNA_vir"/>
</dbReference>
<dbReference type="InterPro" id="IPR014759">
    <property type="entry name" value="Helicase_SF3_ssRNA_vir"/>
</dbReference>
<dbReference type="InterPro" id="IPR027417">
    <property type="entry name" value="P-loop_NTPase"/>
</dbReference>
<dbReference type="InterPro" id="IPR038765">
    <property type="entry name" value="Papain-like_cys_pep_sf"/>
</dbReference>
<dbReference type="InterPro" id="IPR044067">
    <property type="entry name" value="PCV_3C_PRO"/>
</dbReference>
<dbReference type="InterPro" id="IPR008739">
    <property type="entry name" value="Peptidase_C28"/>
</dbReference>
<dbReference type="InterPro" id="IPR000199">
    <property type="entry name" value="Peptidase_C3A/C3B_picornavir"/>
</dbReference>
<dbReference type="InterPro" id="IPR009003">
    <property type="entry name" value="Peptidase_S1_PA"/>
</dbReference>
<dbReference type="InterPro" id="IPR043504">
    <property type="entry name" value="Peptidase_S1_PA_chymotrypsin"/>
</dbReference>
<dbReference type="InterPro" id="IPR001676">
    <property type="entry name" value="Picornavirus_capsid"/>
</dbReference>
<dbReference type="InterPro" id="IPR043128">
    <property type="entry name" value="Rev_trsase/Diguanyl_cyclase"/>
</dbReference>
<dbReference type="InterPro" id="IPR033703">
    <property type="entry name" value="Rhv-like"/>
</dbReference>
<dbReference type="InterPro" id="IPR001205">
    <property type="entry name" value="RNA-dir_pol_C"/>
</dbReference>
<dbReference type="InterPro" id="IPR007094">
    <property type="entry name" value="RNA-dir_pol_PSvirus"/>
</dbReference>
<dbReference type="InterPro" id="IPR029053">
    <property type="entry name" value="Viral_coat"/>
</dbReference>
<dbReference type="Pfam" id="PF05408">
    <property type="entry name" value="Peptidase_C28"/>
    <property type="match status" value="1"/>
</dbReference>
<dbReference type="Pfam" id="PF00548">
    <property type="entry name" value="Peptidase_C3"/>
    <property type="match status" value="1"/>
</dbReference>
<dbReference type="Pfam" id="PF00680">
    <property type="entry name" value="RdRP_1"/>
    <property type="match status" value="1"/>
</dbReference>
<dbReference type="Pfam" id="PF00073">
    <property type="entry name" value="Rhv"/>
    <property type="match status" value="2"/>
</dbReference>
<dbReference type="Pfam" id="PF22663">
    <property type="entry name" value="Rhv_5"/>
    <property type="match status" value="1"/>
</dbReference>
<dbReference type="Pfam" id="PF00910">
    <property type="entry name" value="RNA_helicase"/>
    <property type="match status" value="1"/>
</dbReference>
<dbReference type="Pfam" id="PF08935">
    <property type="entry name" value="VP4_2"/>
    <property type="match status" value="1"/>
</dbReference>
<dbReference type="PRINTS" id="PR00918">
    <property type="entry name" value="CALICVIRUSNS"/>
</dbReference>
<dbReference type="PRINTS" id="PR01542">
    <property type="entry name" value="FMDVP1COAT"/>
</dbReference>
<dbReference type="SUPFAM" id="SSF54001">
    <property type="entry name" value="Cysteine proteinases"/>
    <property type="match status" value="1"/>
</dbReference>
<dbReference type="SUPFAM" id="SSF56672">
    <property type="entry name" value="DNA/RNA polymerases"/>
    <property type="match status" value="1"/>
</dbReference>
<dbReference type="SUPFAM" id="SSF52540">
    <property type="entry name" value="P-loop containing nucleoside triphosphate hydrolases"/>
    <property type="match status" value="1"/>
</dbReference>
<dbReference type="SUPFAM" id="SSF88633">
    <property type="entry name" value="Positive stranded ssRNA viruses"/>
    <property type="match status" value="2"/>
</dbReference>
<dbReference type="SUPFAM" id="SSF50494">
    <property type="entry name" value="Trypsin-like serine proteases"/>
    <property type="match status" value="1"/>
</dbReference>
<dbReference type="PROSITE" id="PS51887">
    <property type="entry name" value="APHTHOVIRUS_LPRO"/>
    <property type="match status" value="1"/>
</dbReference>
<dbReference type="PROSITE" id="PS51874">
    <property type="entry name" value="PCV_3C_PRO"/>
    <property type="match status" value="1"/>
</dbReference>
<dbReference type="PROSITE" id="PS50507">
    <property type="entry name" value="RDRP_SSRNA_POS"/>
    <property type="match status" value="1"/>
</dbReference>
<dbReference type="PROSITE" id="PS51218">
    <property type="entry name" value="SF3_HELICASE_2"/>
    <property type="match status" value="1"/>
</dbReference>
<comment type="function">
    <molecule>Leader protease</molecule>
    <text evidence="4 6">Autocatalytically cleaves itself from the polyprotein at the L/VP0 junction. Also cleaves the host translation initiation factors EIF4G1 and EIF4G3, in order to shut off the capped cellular mRNA transcription. Plays a role in counteracting host innate antiviral response using diverse mechanisms. Possesses a deubiquitinase activity acting on both 'Lys-48' and 'Lys-63'-linked polyubiquitin chains. In turn, inhibits the ubiquitination and subsequent activation of key signaling molecules of type I IFN response such as host RIGI, TBK1, TRAF3 and TRAF6. Inhibits host NF-kappa-B activity by inducing a decrease in RELA mRNA levels. Cleaves a peptide bond in the C-terminus of host ISG15, resulting in the damaging of this modifier that can no longer be attached to target proteins. Also cleaves host G3BP1 and G3BP2 in order to inhibit cytoplasmic stress granules assembly.</text>
</comment>
<comment type="function">
    <molecule>Capsid protein VP4</molecule>
    <text evidence="3">Lies on the inner surface of the capsid shell. After binding to the host receptor, the capsid undergoes conformational changes. Capsid protein VP4 is released, capsid protein VP1 N-terminus is externalized, and together, they shape a pore in the host membrane through which the viral genome is translocated into the host cell cytoplasm. After genome has been released, the channel shrinks.</text>
</comment>
<comment type="function">
    <molecule>Capsid protein VP2</molecule>
    <text evidence="4 5">Forms an icosahedral capsid of pseudo T=3 symmetry with capsid proteins VP1 and VP3. The capsid is composed of 60 copies of each capsid protein organized in the form of twelve pentamers and encloses the viral positive strand RNA genome (By similarity). Upon acidifcation in the endosome, dissociates into pentamers (By similarity).</text>
</comment>
<comment type="function">
    <molecule>Capsid protein VP3</molecule>
    <text evidence="4 5">Forms an icosahedral capsid of pseudo T=3 symmetry with capsid proteins VP0 and VP3. The capsid is composed of 60 copies of each capsid protein organized in the form of twelve pentamers and encloses the viral positive strand RNA genome (By similarity). Upon acidifcation in the endosome, dissociates into pentamers (By similarity).</text>
</comment>
<comment type="function">
    <molecule>Capsid protein VP1</molecule>
    <text evidence="4 5">Forms an icosahedral capsid of pseudo T=3 symmetry with capsid proteins VP2 and VP3. The capsid is composed of 60 copies of each capsid protein organized in the form of twelve pentamers and encloses the viral positive strand RNA genome. Mediates cell entry by attachment to an integrin receptor, usually host ITGAV/ITGB6. In addition, targets host MAVS to suppress type I IFN pathway (By similarity). Upon acidifcation in the endosome, dissociates into pentamers (By similarity).</text>
</comment>
<comment type="function">
    <molecule>Protein 2A</molecule>
    <text evidence="4">Mediates self-processing of the polyprotein by a translational effect termed 'ribosome skipping'. Mechanistically, 2A-mediated cleavage occurs between the C-terminal glycine and the proline of the downstream protein 2B. In the case of foot-and-mouth disease virus, the 2A oligopeptide is post-translationally 'trimmed' from the C-terminus of the upstream protein 1D by 3C proteinase.</text>
</comment>
<comment type="function">
    <molecule>Protein 2B</molecule>
    <text evidence="4">Plays an essential role in the virus replication cycle by acting as a viroporin. Creates a pore in the host endoplasmic reticulum and as a consequence releases Ca2+ in the cytoplasm of infected cell. In turn, high levels of cytoplasmic calcium may trigger membrane trafficking and transport of viral ER-associated proteins to viroplasms, sites of viral genome replication.</text>
</comment>
<comment type="function">
    <molecule>Protein 2C</molecule>
    <text evidence="4">Associates with and induces structural rearrangements of intracellular membranes. Triggers host autophagy by interacting with host BECN1 and thereby promotes viral replication. Participates in viral replication and interacts with host DHX9. Displays RNA-binding, nucleotide binding and NTPase activities. May play a role in virion morphogenesis and viral RNA encapsidation by interacting with the capsid protein VP3.</text>
</comment>
<comment type="function">
    <molecule>Protein 3A</molecule>
    <text evidence="4">Plays important roles in virus replication, virulence and host range. Cooperates with host DDX56 to inhibit IRF3 nuclear translocation and subsequent type I interferon production.</text>
</comment>
<comment type="function">
    <molecule>Protein 3B-1</molecule>
    <text evidence="4">Covalently linked to the 5'-end of both the positive-strand and negative-strand genomic RNAs. Acts as a genome-linked replication primer.</text>
</comment>
<comment type="function">
    <molecule>Protein 3B-2</molecule>
    <text evidence="4">Covalently linked to the 5'-end of both the positive-strand and negative-strand genomic RNAs. Acts as a genome-linked replication primer.</text>
</comment>
<comment type="function">
    <molecule>Protein 3B-3</molecule>
    <text evidence="4">Covalently linked to the 5'-end of both the positive-strand and negative-strand genomic RNAs. Acts as a genome-linked replication primer.</text>
</comment>
<comment type="function">
    <molecule>Protease 3C</molecule>
    <text evidence="4">Cysteine protease that generates mature viral proteins from the precursor polyprotein. In addition to its proteolytic activity, binds to viral RNA and thus influences viral genome replication. RNA and substrate bind cooperatively to the protease.</text>
</comment>
<comment type="function">
    <text evidence="4">RNA-directed RNA polymerase 3D-POL replicates genomic and antigenomic RNA by recognizing replications specific signals. Covalently attaches UMP to a tyrosine of VPg, which is used to prime RNA synthesis. The positive stranded RNA genome is first replicated at virus induced membranous vesicles, creating a dsRNA genomic replication form. This dsRNA is then used as template to synthesize positive stranded RNA genomes. ss(+)RNA genomes are either translated, replicated or encapsidated.</text>
</comment>
<comment type="catalytic activity">
    <molecule>Leader protease</molecule>
    <reaction>
        <text>Autocatalytically cleaves itself from the polyprotein of the foot-and-mouth disease virus by hydrolysis of a Lys-|-Gly bond, but then cleaves host cell initiation factor eIF-4G at bonds -Gly-|-Arg- and -Lys-|-Arg-.</text>
        <dbReference type="EC" id="3.4.22.46"/>
    </reaction>
</comment>
<comment type="catalytic activity">
    <molecule>Protein 2C</molecule>
    <reaction evidence="4">
        <text>a ribonucleoside 5'-triphosphate + H2O = a ribonucleoside 5'-diphosphate + phosphate + H(+)</text>
        <dbReference type="Rhea" id="RHEA:23680"/>
        <dbReference type="ChEBI" id="CHEBI:15377"/>
        <dbReference type="ChEBI" id="CHEBI:15378"/>
        <dbReference type="ChEBI" id="CHEBI:43474"/>
        <dbReference type="ChEBI" id="CHEBI:57930"/>
        <dbReference type="ChEBI" id="CHEBI:61557"/>
        <dbReference type="EC" id="3.6.1.15"/>
    </reaction>
</comment>
<comment type="catalytic activity">
    <molecule>RNA-directed RNA polymerase 3D-POL</molecule>
    <reaction evidence="10">
        <text>RNA(n) + a ribonucleoside 5'-triphosphate = RNA(n+1) + diphosphate</text>
        <dbReference type="Rhea" id="RHEA:21248"/>
        <dbReference type="Rhea" id="RHEA-COMP:14527"/>
        <dbReference type="Rhea" id="RHEA-COMP:17342"/>
        <dbReference type="ChEBI" id="CHEBI:33019"/>
        <dbReference type="ChEBI" id="CHEBI:61557"/>
        <dbReference type="ChEBI" id="CHEBI:140395"/>
        <dbReference type="EC" id="2.7.7.48"/>
    </reaction>
</comment>
<comment type="catalytic activity">
    <molecule>Protease 3C</molecule>
    <reaction evidence="12">
        <text>Selective cleavage of Gln-|-Gly bond in the poliovirus polyprotein. In other picornavirus reactions Glu may be substituted for Gln, and Ser or Thr for Gly.</text>
        <dbReference type="EC" id="3.4.22.28"/>
    </reaction>
</comment>
<comment type="subunit">
    <molecule>Leader protease</molecule>
    <text evidence="4">Interacts with host ISG15. Capsid protein VP1: Interacts (via R-G-D motif) with host ITGAV/ITGB6.</text>
</comment>
<comment type="subunit">
    <molecule>Capsid protein VP1</molecule>
    <text evidence="4">Interacts (via R-G-D motif) with host ITGAV/ITGB6 (By similarity). Interacts with host MAVS; this interaction inhibits binding of host TRAF3 to MAVS, thereby suppressing interferon-mediated responses (By similarity).</text>
</comment>
<comment type="subunit">
    <molecule>Protein 2B</molecule>
    <text evidence="4">Forms homooligomers.</text>
</comment>
<comment type="subunit">
    <molecule>Protein 2C</molecule>
    <text evidence="4">Homohexamer. Interacts with host VIM. Interacts with host BECN1.</text>
</comment>
<comment type="subunit">
    <molecule>Protein 3A</molecule>
    <text evidence="4">Interacts with host DCTN3.</text>
</comment>
<comment type="subunit">
    <molecule>Protein 3B-1</molecule>
    <text evidence="7">Interacts with RNA-dependent RNA polymerase; this interaction allows 3B-1 to binds 2 polymerases and act as a primer. It also allows the recruitment of the RNA-dependent RNA polymerase to host membranes.</text>
</comment>
<comment type="subunit">
    <molecule>Protein 3B-2</molecule>
    <text evidence="7">Interacts with RNA-dependent RNA polymerase; this interaction allows 3B-2 to act as a primer.</text>
</comment>
<comment type="subunit">
    <molecule>Protein 3B-3</molecule>
    <text evidence="7">Interacts with RNA-dependent RNA polymerase; this interaction allows 3B-3 to act as a primer.</text>
</comment>
<comment type="subunit">
    <molecule>RNA-directed RNA polymerase 3D-POL</molecule>
    <text evidence="7">Interacts with 3B-1; this interaction allows 3B-1 to binds 2 polymerases and act as a primer. It also allows the recruitment of the RNA-dependent RNA polymerase to host membranes (By similarity). Interacts with 3B-2; this interaction allows 3B-2 to act as a primer (By similarity). Interacts with 3B-3; this interaction allows 3B-3 to act as a primer (By similarity).</text>
</comment>
<comment type="subcellular location">
    <molecule>Leader protease</molecule>
    <subcellularLocation>
        <location evidence="4">Host nucleus</location>
    </subcellularLocation>
    <subcellularLocation>
        <location evidence="4">Host cytoplasm</location>
    </subcellularLocation>
</comment>
<comment type="subcellular location">
    <molecule>Capsid protein VP3</molecule>
    <subcellularLocation>
        <location evidence="4">Virion</location>
    </subcellularLocation>
    <subcellularLocation>
        <location evidence="14">Host cytoplasm</location>
    </subcellularLocation>
</comment>
<comment type="subcellular location">
    <molecule>Capsid protein VP1</molecule>
    <subcellularLocation>
        <location evidence="4">Virion</location>
    </subcellularLocation>
    <subcellularLocation>
        <location evidence="14">Host cytoplasm</location>
    </subcellularLocation>
</comment>
<comment type="subcellular location">
    <molecule>Capsid protein VP2</molecule>
    <subcellularLocation>
        <location evidence="4">Virion</location>
    </subcellularLocation>
    <subcellularLocation>
        <location evidence="14">Host cytoplasm</location>
    </subcellularLocation>
</comment>
<comment type="subcellular location">
    <molecule>Protein 2B</molecule>
    <subcellularLocation>
        <location evidence="4">Host endoplasmic reticulum membrane</location>
    </subcellularLocation>
</comment>
<comment type="subcellular location">
    <molecule>Protein 2C</molecule>
    <subcellularLocation>
        <location evidence="14">Host cytoplasmic vesicle membrane</location>
        <topology evidence="14">Peripheral membrane protein</topology>
        <orientation evidence="14">Cytoplasmic side</orientation>
    </subcellularLocation>
    <text evidence="1">Probably localizes to the surface of intracellular membrane vesicles that are induced after virus infection as the site for viral RNA replication. These vesicles are derived from the endoplasmic reticulum (By similarity).</text>
</comment>
<comment type="subcellular location">
    <molecule>Protein 3A</molecule>
    <subcellularLocation>
        <location evidence="14">Host cytoplasmic vesicle membrane</location>
        <topology evidence="14">Peripheral membrane protein</topology>
        <orientation evidence="14">Cytoplasmic side</orientation>
    </subcellularLocation>
    <text evidence="1">Probably localizes to the surface of intracellular membrane vesicles that are induced after virus infection as the site for viral RNA replication. These vesicles are derived from the endoplasmic reticulum (By similarity).</text>
</comment>
<comment type="subcellular location">
    <molecule>Protein 3B-1</molecule>
    <subcellularLocation>
        <location evidence="14">Virion</location>
    </subcellularLocation>
</comment>
<comment type="subcellular location">
    <molecule>Protein 3B-2</molecule>
    <subcellularLocation>
        <location evidence="14">Virion</location>
    </subcellularLocation>
</comment>
<comment type="subcellular location">
    <molecule>Protein 3B-3</molecule>
    <subcellularLocation>
        <location evidence="14">Virion</location>
    </subcellularLocation>
</comment>
<comment type="subcellular location">
    <molecule>Protease 3C</molecule>
    <subcellularLocation>
        <location evidence="14">Host cytoplasm</location>
    </subcellularLocation>
</comment>
<comment type="subcellular location">
    <molecule>RNA-directed RNA polymerase 3D-POL</molecule>
    <subcellularLocation>
        <location evidence="14">Host cytoplasmic vesicle membrane</location>
        <topology evidence="14">Peripheral membrane protein</topology>
        <orientation evidence="14">Cytoplasmic side</orientation>
    </subcellularLocation>
    <text evidence="1">Probably localizes to the surface of intracellular membrane vesicles that are induced after virus infection as the site for viral RNA replication. These vesicles are derived from the endoplasmic reticulum (By similarity).</text>
</comment>
<comment type="alternative products">
    <event type="alternative initiation"/>
    <isoform>
        <id>P03307-1</id>
        <name>Lab</name>
        <sequence type="displayed"/>
    </isoform>
    <isoform>
        <id>P03307-2</id>
        <name>Lb</name>
        <sequence type="described" ref="VSP_046529"/>
    </isoform>
</comment>
<comment type="PTM">
    <molecule>Leader protease</molecule>
    <text evidence="4">Removes six residues from its own C-terminus, generating sLb(pro).</text>
</comment>
<comment type="PTM">
    <molecule>Genome polyprotein</molecule>
    <text evidence="4">Specific enzymatic cleavages in vivo by the viral proteases yield a variety of precursors and mature proteins. The polyprotein seems to be cotranslationally cleaved at the 2A/2B junction by a ribosomal skip from one codon to the next without formation of a peptide bond. This process would release the L-P1-2A peptide from the translational complex.</text>
</comment>
<comment type="PTM">
    <molecule>Capsid protein VP0</molecule>
    <text evidence="4">During virion maturation, immature virions are rendered infectious following cleavage of VP0 into VP4 and VP2. This maturation seems to be an autocatalytic event triggered by the presence of RNA in the capsid and is followed by a conformational change of the particle.</text>
</comment>
<comment type="PTM">
    <molecule>Capsid protein VP4</molecule>
    <text evidence="7">Myristoylation is required during RNA encapsidation and formation of the mature virus particle.</text>
</comment>
<comment type="PTM">
    <molecule>Protein 3B-1</molecule>
    <text evidence="4">Uridylylated by the polymerase and covalently linked to the 5'-end of genomic RNA. These uridylylated forms act as a nucleotide-peptide primer for the polymerase.</text>
</comment>
<comment type="PTM">
    <molecule>Protein 3B-2</molecule>
    <text evidence="4">Uridylylated by the polymerase and covalently linked to the 5'-end of genomic RNA. These uridylylated forms act as a nucleotide-peptide primer for the polymerase.</text>
</comment>
<comment type="PTM">
    <molecule>Protein 3B-3</molecule>
    <text evidence="4">Uridylylated by the polymerase and covalently linked to the 5'-end of genomic RNA. These uridylylated forms act as a nucleotide-peptide primer for the polymerase.</text>
</comment>
<comment type="miscellaneous">
    <molecule>Capsid protein VP1</molecule>
    <text evidence="14">Contains the main antigenic determinants of the virion; therefore, changes in its sequence must be responsible for the high antigenic variability of the virus.</text>
</comment>
<comment type="similarity">
    <text evidence="14">Belongs to the picornaviruses polyprotein family.</text>
</comment>
<comment type="sequence caution" evidence="14">
    <conflict type="erroneous initiation">
        <sequence resource="EMBL-CDS" id="CAA24365"/>
    </conflict>
</comment>
<sequence>MHTTDCFIALVHAIREIRALFLPRTTGKMELTLHNGEKKTFYSRPNNHDNCWLNTILQLFRYVDEPFFDWVYNSPENLTLEAINQLEELTGLELHEGGPPALVIWNIKHLLHTGIGTASRPSEVCMVDGTDMCLADFHAGIFLKGQEHAVFACVTSNGWYAIDDEEFYPWTPDPSDVLVFVPYDQEPLNGDWKAMVQRKLKGAGQSSPATGSQNQSGNTGSIINNYYMQQYQNSMDTQLGDNAISGGSNEGSTDTTSTHTTNTQNNDWFSKLASSAFTGLFGALLADKKTEETTLLEDRILTTRNGHTISTTQSSVGVTYGYSTGEDHVAGPNTSGLETRVVQAERFFKKFLFDWTTDKPFGHLEKLELPADHHGVFGHLVESYAYMRNGWDVEVSAVGNQFNGGCLLVAMVPEWKEFEQREKYQLTLFPHQFISPRTNMTAHITVPYLGVNRYDQYKKHKPWTLVVMVVSPLTVSDTAAAQIKVYANIAPTYVHVAGELPSKEGIFPVACSDGYGGLVTTDPKTADPAYGKVYNPPRTNYPGRFTNLLDVAEACPTFLCFDDGKPYVVTRTDDTRLLAKFDVSLAAKHMSNTYLSGIAQYYAQYSGTINLHFMFTGSTDSKARYMVAYIPPGVEVPPDTPERAAHCIHAEWDTGLNSKFTFSIPYVSAADYAYTASDTAETTNVQGWVCIYQITHGKAENDTLVVSASAGKDFELRLPIDPRQQTTAVGESADPVTTTVENYGGETQTQRRHHTDVGFIMDRFVKINSLSPTHVIDLMQTHQHGLVGALLRAATYYFSDLEIVVRHDGNLTWVPNGAPEAALSNTSNPTAYNKAPFTRLALPYTAPHRVLATVYNGTNKYSTGGPRRGDTGSPAARAAKQLPASFNYGAIRAVTIHELLVRMKRAELYCPRPLLAIEVSSQDRHKQKIIAPARQLLNFDLLKLAGDVESNPGPFFFSDVRSNFSKLVETINQMQEDMSTKHGPDFNRLVSAFEELAAGVKAIRTGLDEAKPWYKLIKLLSRLSCMAAVAARSKDPVLVAIMLADTGLEILDSTFVVKKISDSLSSLFHVPAPVFSFGAPILLAGLVKVASSFFRSTPEDLERAEKQLKARDINDIFAILKNGEWLVKLILAIRDWIKAWIASEEKFVTMTDLVPGILEKQHDLNDPSKYKEAKEWLDNARQACLKSGNVHIANLCKVVAPAPSKPRPEPVVVCLRGKSGQGKSFLANVLAQAISTHFTGRTDSVWYCPPDPDHFDGYNQQTVVVMDDLGQNPDGKDFKYFAQMVSTTGFIPPMASLEDKGKPFNSKVIIATTNLYSGFTPRTMVCPDALNRRFHFDIDVSAKDGYKINNKLDITKALEDTHTNPVAMFQYDCALLNGMAVEMKRMQQDMFKPQPPLQNVYQLVQEVIDRVELHEKVSSHPIFKQISIPSQKSVLYFLIKKGQHEAAIEFFEGMVHDSVKEELRPLIQQTSFVKRAFKRLKENFEIVALCLTLLANIVIMIRETRKRQKMVDDAVNEYIEKANITTDDKTLDEAEKNPLETSGASTVGFRERTLPGQKARDDVNSEPAQPAEEQPQAEGPYAGPLERQRPLKVRAKLPQQEGPYAGPMERQKPLKVKAKAPVVKEGPYEGPVKKPVALKVRAKNLIVTESGAPPTDLQKMVMGNTKPVELILDGKTVAICCATGVFGTAYLVPRHLFAEKYDKIMLDGRAMTDSDYRVFEFEIKVKGQDMLSDAALMVLHRGNRVRDITKHFRDTARMKKGTPVVGVINNADVGRLIFSGEALTYKDIVVCMDGDTMPGLFAYRAATKAGYCGGAVLAKDGADTFIVGTHSAGGNGVGYCSCVSRSMLLKMKAHIDPEPHHEGLIVDTRDAEERVHVMRKTKLAPTVAHGVFNPEFGPAALSNKDPRLNEGVVLDEVIFSKHKGDTKMSEEDKALFRRCAADYASRLHSVLGTANAPLSIYEAIKGVDGLDAMEPDTAPGLPWALQGKRRGALIDFENGTVGPEVEAALKLMEKREYKFVCQTFLKDEIRPMEKVRAGKTRIVDVLPVEHILYTRMMIGRFCAQMHSNNGPQIGSAVGCNPDVDWQRFGTHFAQYRNVWDVDYSAFDANHCSDAMNIMFEEVFRTDFGFHPNAEWILKTLVNTEHAYENKRHTVEGGMPSGCSATSIINTILNNIYVLYALRRHYEGVELDTYTMISYGDDIVVASDYDLDFEALKPHFKSLGQTITPADKSDKGFVLGHSITDVTFLKRHFHMDYGTGFYKPVMASKTLEAILSFARRGTIQEKLISVAGLAVHSGPDEYRRLFEPFQGLFEIPSYRSLYLRWVNAVCGDA</sequence>
<accession>P03307</accession>
<accession>Q6PN05</accession>
<organism>
    <name type="scientific">Foot-and-mouth disease virus (isolate -/Germany/A5Westerwald/1951 serotype A)</name>
    <name type="common">FMDV</name>
    <dbReference type="NCBI Taxonomy" id="12113"/>
    <lineage>
        <taxon>Viruses</taxon>
        <taxon>Riboviria</taxon>
        <taxon>Orthornavirae</taxon>
        <taxon>Pisuviricota</taxon>
        <taxon>Pisoniviricetes</taxon>
        <taxon>Picornavirales</taxon>
        <taxon>Picornaviridae</taxon>
        <taxon>Caphthovirinae</taxon>
        <taxon>Aphthovirus</taxon>
        <taxon>Foot-and-mouth disease virus</taxon>
    </lineage>
</organism>
<protein>
    <recommendedName>
        <fullName>Genome polyprotein</fullName>
    </recommendedName>
    <component>
        <recommendedName>
            <fullName>Leader protease</fullName>
            <shortName>Lpro</shortName>
            <ecNumber evidence="4">3.4.22.46</ecNumber>
        </recommendedName>
    </component>
    <component>
        <recommendedName>
            <fullName>Capsid protein VP0</fullName>
        </recommendedName>
        <alternativeName>
            <fullName>VP4-VP2</fullName>
        </alternativeName>
    </component>
    <component>
        <recommendedName>
            <fullName>Capsid protein VP4</fullName>
        </recommendedName>
        <alternativeName>
            <fullName>P1A</fullName>
        </alternativeName>
        <alternativeName>
            <fullName>Virion protein 4</fullName>
        </alternativeName>
    </component>
    <component>
        <recommendedName>
            <fullName>Capsid protein VP2</fullName>
        </recommendedName>
        <alternativeName>
            <fullName>P1B</fullName>
        </alternativeName>
        <alternativeName>
            <fullName>Virion protein 2</fullName>
        </alternativeName>
    </component>
    <component>
        <recommendedName>
            <fullName>Capsid protein VP3</fullName>
        </recommendedName>
        <alternativeName>
            <fullName>P1C</fullName>
        </alternativeName>
        <alternativeName>
            <fullName>Virion protein 3</fullName>
        </alternativeName>
    </component>
    <component>
        <recommendedName>
            <fullName>Capsid protein VP1</fullName>
        </recommendedName>
        <alternativeName>
            <fullName>P1D</fullName>
        </alternativeName>
        <alternativeName>
            <fullName>Virion protein 1</fullName>
        </alternativeName>
    </component>
    <component>
        <recommendedName>
            <fullName>Protein 2A</fullName>
            <shortName>P2A</shortName>
        </recommendedName>
        <alternativeName>
            <fullName>P52</fullName>
        </alternativeName>
    </component>
    <component>
        <recommendedName>
            <fullName>Protein 2B</fullName>
            <shortName>P2B</shortName>
        </recommendedName>
    </component>
    <component>
        <recommendedName>
            <fullName>Protein 2C</fullName>
            <shortName>P2C</shortName>
            <ecNumber evidence="4">3.6.1.15</ecNumber>
        </recommendedName>
    </component>
    <component>
        <recommendedName>
            <fullName>Protein 3A</fullName>
            <shortName>P3A</shortName>
        </recommendedName>
    </component>
    <component>
        <recommendedName>
            <fullName>Protein 3B-1</fullName>
            <shortName>P3B-1</shortName>
        </recommendedName>
        <alternativeName>
            <fullName>Genome-linked protein VPg1</fullName>
        </alternativeName>
    </component>
    <component>
        <recommendedName>
            <fullName>Protein 3B-2</fullName>
            <shortName>P3B-2</shortName>
        </recommendedName>
        <alternativeName>
            <fullName>Genome-linked protein VPg2</fullName>
        </alternativeName>
    </component>
    <component>
        <recommendedName>
            <fullName>Protein 3B-3</fullName>
            <shortName>P3B-3</shortName>
        </recommendedName>
        <alternativeName>
            <fullName>Genome-linked protein VPg3</fullName>
        </alternativeName>
    </component>
    <component>
        <recommendedName>
            <fullName>Protease 3C</fullName>
            <ecNumber>3.4.22.28</ecNumber>
        </recommendedName>
        <alternativeName>
            <fullName>Picornain 3C</fullName>
            <shortName>P3C</shortName>
        </alternativeName>
        <alternativeName>
            <fullName>Protease P20B</fullName>
        </alternativeName>
    </component>
    <component>
        <recommendedName>
            <fullName>RNA-directed RNA polymerase 3D-POL</fullName>
            <shortName>P3D-POL</shortName>
            <ecNumber evidence="4">2.7.7.48</ecNumber>
        </recommendedName>
        <alternativeName>
            <fullName>P56A</fullName>
        </alternativeName>
    </component>
</protein>
<evidence type="ECO:0000250" key="1"/>
<evidence type="ECO:0000250" key="2">
    <source>
        <dbReference type="UniProtKB" id="A2I7M2"/>
    </source>
</evidence>
<evidence type="ECO:0000250" key="3">
    <source>
        <dbReference type="UniProtKB" id="P03300"/>
    </source>
</evidence>
<evidence type="ECO:0000250" key="4">
    <source>
        <dbReference type="UniProtKB" id="P03305"/>
    </source>
</evidence>
<evidence type="ECO:0000250" key="5">
    <source>
        <dbReference type="UniProtKB" id="P03306"/>
    </source>
</evidence>
<evidence type="ECO:0000250" key="6">
    <source>
        <dbReference type="UniProtKB" id="P03308"/>
    </source>
</evidence>
<evidence type="ECO:0000250" key="7">
    <source>
        <dbReference type="UniProtKB" id="P03311"/>
    </source>
</evidence>
<evidence type="ECO:0000250" key="8">
    <source>
        <dbReference type="UniProtKB" id="P12296"/>
    </source>
</evidence>
<evidence type="ECO:0000255" key="9"/>
<evidence type="ECO:0000255" key="10">
    <source>
        <dbReference type="PROSITE-ProRule" id="PRU00539"/>
    </source>
</evidence>
<evidence type="ECO:0000255" key="11">
    <source>
        <dbReference type="PROSITE-ProRule" id="PRU00551"/>
    </source>
</evidence>
<evidence type="ECO:0000255" key="12">
    <source>
        <dbReference type="PROSITE-ProRule" id="PRU01222"/>
    </source>
</evidence>
<evidence type="ECO:0000256" key="13">
    <source>
        <dbReference type="SAM" id="MobiDB-lite"/>
    </source>
</evidence>
<evidence type="ECO:0000305" key="14"/>
<keyword id="KW-0002">3D-structure</keyword>
<keyword id="KW-0024">Alternative initiation</keyword>
<keyword id="KW-0067">ATP-binding</keyword>
<keyword id="KW-0167">Capsid protein</keyword>
<keyword id="KW-1167">Clathrin- and caveolin-independent endocytosis of virus by host</keyword>
<keyword id="KW-1165">Clathrin-mediated endocytosis of virus by host</keyword>
<keyword id="KW-0191">Covalent protein-RNA linkage</keyword>
<keyword id="KW-1015">Disulfide bond</keyword>
<keyword id="KW-0347">Helicase</keyword>
<keyword id="KW-1035">Host cytoplasm</keyword>
<keyword id="KW-1036">Host cytoplasmic vesicle</keyword>
<keyword id="KW-1038">Host endoplasmic reticulum</keyword>
<keyword id="KW-1043">Host membrane</keyword>
<keyword id="KW-1048">Host nucleus</keyword>
<keyword id="KW-0945">Host-virus interaction</keyword>
<keyword id="KW-0378">Hydrolase</keyword>
<keyword id="KW-0407">Ion channel</keyword>
<keyword id="KW-0406">Ion transport</keyword>
<keyword id="KW-0449">Lipoprotein</keyword>
<keyword id="KW-0472">Membrane</keyword>
<keyword id="KW-1122">Modulation of host chromatin by virus</keyword>
<keyword id="KW-0519">Myristate</keyword>
<keyword id="KW-0547">Nucleotide-binding</keyword>
<keyword id="KW-0548">Nucleotidyltransferase</keyword>
<keyword id="KW-0597">Phosphoprotein</keyword>
<keyword id="KW-0645">Protease</keyword>
<keyword id="KW-0694">RNA-binding</keyword>
<keyword id="KW-0696">RNA-directed RNA polymerase</keyword>
<keyword id="KW-1143">T=pseudo3 icosahedral capsid protein</keyword>
<keyword id="KW-0788">Thiol protease</keyword>
<keyword id="KW-0808">Transferase</keyword>
<keyword id="KW-0810">Translation regulation</keyword>
<keyword id="KW-0813">Transport</keyword>
<keyword id="KW-1161">Viral attachment to host cell</keyword>
<keyword id="KW-1182">Viral ion channel</keyword>
<keyword id="KW-1162">Viral penetration into host cytoplasm</keyword>
<keyword id="KW-0693">Viral RNA replication</keyword>
<keyword id="KW-0946">Virion</keyword>
<keyword id="KW-1164">Virus endocytosis by host</keyword>
<keyword id="KW-1160">Virus entry into host cell</keyword>
<name>POLG_FMDV5</name>
<proteinExistence type="evidence at protein level"/>
<organismHost>
    <name type="scientific">Bos taurus</name>
    <name type="common">Bovine</name>
    <dbReference type="NCBI Taxonomy" id="9913"/>
</organismHost>
<organismHost>
    <name type="scientific">Capra hircus</name>
    <name type="common">Goat</name>
    <dbReference type="NCBI Taxonomy" id="9925"/>
</organismHost>
<organismHost>
    <name type="scientific">Cervidae</name>
    <name type="common">Deer</name>
    <dbReference type="NCBI Taxonomy" id="9850"/>
</organismHost>
<organismHost>
    <name type="scientific">Erinaceidae</name>
    <name type="common">hedgehogs</name>
    <dbReference type="NCBI Taxonomy" id="9363"/>
</organismHost>
<organismHost>
    <name type="scientific">Loxodonta africana</name>
    <name type="common">African elephant</name>
    <dbReference type="NCBI Taxonomy" id="9785"/>
</organismHost>
<organismHost>
    <name type="scientific">Ovis aries</name>
    <name type="common">Sheep</name>
    <dbReference type="NCBI Taxonomy" id="9940"/>
</organismHost>
<organismHost>
    <name type="scientific">Rattus norvegicus</name>
    <name type="common">Rat</name>
    <dbReference type="NCBI Taxonomy" id="10116"/>
</organismHost>
<organismHost>
    <name type="scientific">Sus scrofa</name>
    <name type="common">Pig</name>
    <dbReference type="NCBI Taxonomy" id="9823"/>
</organismHost>
<feature type="chain" id="PRO_0000422477" description="Genome polyprotein" evidence="1">
    <location>
        <begin position="1"/>
        <end position="2331"/>
    </location>
</feature>
<feature type="chain" id="PRO_0000422478" description="Leader protease" evidence="1">
    <location>
        <begin position="1"/>
        <end position="201"/>
    </location>
</feature>
<feature type="chain" id="PRO_0000422479" description="Capsid protein VP0" evidence="9">
    <location>
        <begin position="202"/>
        <end position="504"/>
    </location>
</feature>
<feature type="chain" id="PRO_0000422480" description="Capsid protein VP4" evidence="9">
    <location>
        <begin position="202"/>
        <end position="286"/>
    </location>
</feature>
<feature type="chain" id="PRO_0000422481" description="Capsid protein VP2" evidence="9">
    <location>
        <begin position="287"/>
        <end position="504"/>
    </location>
</feature>
<feature type="chain" id="PRO_0000039830" description="Capsid protein VP3" evidence="9">
    <location>
        <begin position="505"/>
        <end position="725"/>
    </location>
</feature>
<feature type="chain" id="PRO_0000039831" description="Capsid protein VP1" evidence="9">
    <location>
        <begin position="726"/>
        <end position="935"/>
    </location>
</feature>
<feature type="chain" id="PRO_0000039832" description="Protein 2A" evidence="9">
    <location>
        <begin position="936"/>
        <end position="953"/>
    </location>
</feature>
<feature type="chain" id="PRO_0000422482" description="Protein 2B" evidence="9">
    <location>
        <begin position="954"/>
        <end position="1107"/>
    </location>
</feature>
<feature type="chain" id="PRO_0000422483" description="Protein 2C" evidence="9">
    <location>
        <begin position="1108"/>
        <end position="1425"/>
    </location>
</feature>
<feature type="chain" id="PRO_0000422484" description="Protein 3A" evidence="9">
    <location>
        <begin position="1426"/>
        <end position="1578"/>
    </location>
</feature>
<feature type="chain" id="PRO_0000422485" description="Protein 3B-1" evidence="9">
    <location>
        <begin position="1579"/>
        <end position="1601"/>
    </location>
</feature>
<feature type="chain" id="PRO_0000422486" description="Protein 3B-2" evidence="9">
    <location>
        <begin position="1602"/>
        <end position="1625"/>
    </location>
</feature>
<feature type="chain" id="PRO_0000422487" description="Protein 3B-3" evidence="9">
    <location>
        <begin position="1626"/>
        <end position="1649"/>
    </location>
</feature>
<feature type="chain" id="PRO_0000422488" description="Protease 3C" evidence="9">
    <location>
        <begin position="1650"/>
        <end position="1862"/>
    </location>
</feature>
<feature type="chain" id="PRO_0000422489" description="RNA-directed RNA polymerase 3D-POL" evidence="9">
    <location>
        <begin position="1863"/>
        <end position="2332"/>
    </location>
</feature>
<feature type="topological domain" description="Cytoplasmic" evidence="9">
    <location>
        <begin position="1"/>
        <end position="1480"/>
    </location>
</feature>
<feature type="intramembrane region" evidence="9">
    <location>
        <begin position="1481"/>
        <end position="1501"/>
    </location>
</feature>
<feature type="topological domain" description="Cytoplasmic" evidence="9">
    <location>
        <begin position="1502"/>
        <end position="2332"/>
    </location>
</feature>
<feature type="domain" description="Peptidase C28">
    <location>
        <begin position="1"/>
        <end position="201"/>
    </location>
</feature>
<feature type="domain" description="SF3 helicase" evidence="11">
    <location>
        <begin position="1189"/>
        <end position="1353"/>
    </location>
</feature>
<feature type="domain" description="Peptidase C3" evidence="12">
    <location>
        <begin position="1652"/>
        <end position="1848"/>
    </location>
</feature>
<feature type="domain" description="RdRp catalytic" evidence="10">
    <location>
        <begin position="2096"/>
        <end position="2214"/>
    </location>
</feature>
<feature type="region of interest" description="Disordered" evidence="13">
    <location>
        <begin position="199"/>
        <end position="218"/>
    </location>
</feature>
<feature type="region of interest" description="Disordered" evidence="13">
    <location>
        <begin position="238"/>
        <end position="265"/>
    </location>
</feature>
<feature type="region of interest" description="Antigenic epitope" evidence="2">
    <location>
        <begin position="789"/>
        <end position="797"/>
    </location>
</feature>
<feature type="region of interest" description="Disordered" evidence="13">
    <location>
        <begin position="1529"/>
        <end position="1584"/>
    </location>
</feature>
<feature type="short sequence motif" description="Cell attachment site" evidence="4">
    <location>
        <begin position="868"/>
        <end position="870"/>
    </location>
</feature>
<feature type="short sequence motif" description="Nuclear localization signal" evidence="7">
    <location>
        <begin position="1878"/>
        <end position="1886"/>
    </location>
</feature>
<feature type="compositionally biased region" description="Polar residues" evidence="13">
    <location>
        <begin position="204"/>
        <end position="218"/>
    </location>
</feature>
<feature type="compositionally biased region" description="Polar residues" evidence="13">
    <location>
        <begin position="238"/>
        <end position="251"/>
    </location>
</feature>
<feature type="compositionally biased region" description="Low complexity" evidence="13">
    <location>
        <begin position="252"/>
        <end position="265"/>
    </location>
</feature>
<feature type="compositionally biased region" description="Basic and acidic residues" evidence="13">
    <location>
        <begin position="1529"/>
        <end position="1538"/>
    </location>
</feature>
<feature type="compositionally biased region" description="Basic and acidic residues" evidence="13">
    <location>
        <begin position="1549"/>
        <end position="1563"/>
    </location>
</feature>
<feature type="compositionally biased region" description="Low complexity" evidence="13">
    <location>
        <begin position="1566"/>
        <end position="1578"/>
    </location>
</feature>
<feature type="active site" description="For leader protease activity" evidence="1">
    <location>
        <position position="51"/>
    </location>
</feature>
<feature type="active site" description="For leader protease activity" evidence="1">
    <location>
        <position position="148"/>
    </location>
</feature>
<feature type="active site" description="For leader protease activity" evidence="1">
    <location>
        <position position="163"/>
    </location>
</feature>
<feature type="active site" description="For protease 3C activity; Proton donor/acceptor" evidence="12">
    <location>
        <position position="1695"/>
    </location>
</feature>
<feature type="active site" description="For protease 3C activity" evidence="12">
    <location>
        <position position="1733"/>
    </location>
</feature>
<feature type="active site" description="For protease 3C activity" evidence="12">
    <location>
        <position position="1812"/>
    </location>
</feature>
<feature type="active site" description="For RdRp activity" evidence="8">
    <location>
        <position position="2200"/>
    </location>
</feature>
<feature type="binding site" evidence="11">
    <location>
        <begin position="1217"/>
        <end position="1224"/>
    </location>
    <ligand>
        <name>ATP</name>
        <dbReference type="ChEBI" id="CHEBI:30616"/>
    </ligand>
</feature>
<feature type="site" description="Cleavage; by leader protease" evidence="9">
    <location>
        <begin position="201"/>
        <end position="202"/>
    </location>
</feature>
<feature type="site" description="Cleavage" evidence="9">
    <location>
        <begin position="286"/>
        <end position="287"/>
    </location>
</feature>
<feature type="site" description="Cleavage; by picornain 3C" evidence="9">
    <location>
        <begin position="504"/>
        <end position="505"/>
    </location>
</feature>
<feature type="site" description="Cleavage; by picornain 3C" evidence="9">
    <location>
        <begin position="725"/>
        <end position="726"/>
    </location>
</feature>
<feature type="site" description="Cleavage; by picornain 3C" evidence="9">
    <location>
        <begin position="935"/>
        <end position="936"/>
    </location>
</feature>
<feature type="site" description="Cleavage; by ribosomal skip" evidence="9">
    <location>
        <begin position="953"/>
        <end position="954"/>
    </location>
</feature>
<feature type="site" description="Cleavage; by picornain 3C" evidence="9">
    <location>
        <begin position="1107"/>
        <end position="1108"/>
    </location>
</feature>
<feature type="site" description="Cleavage; by picornain 3C" evidence="9">
    <location>
        <begin position="1425"/>
        <end position="1426"/>
    </location>
</feature>
<feature type="site" description="Cleavage; by picornain 3C" evidence="9">
    <location>
        <begin position="1578"/>
        <end position="1579"/>
    </location>
</feature>
<feature type="site" description="Cleavage; by picornain 3C" evidence="9">
    <location>
        <begin position="1601"/>
        <end position="1602"/>
    </location>
</feature>
<feature type="site" description="Cleavage; by picornain 3C" evidence="9">
    <location>
        <begin position="1625"/>
        <end position="1626"/>
    </location>
</feature>
<feature type="site" description="Cleavage; by picornain 3C" evidence="9">
    <location>
        <begin position="1649"/>
        <end position="1650"/>
    </location>
</feature>
<feature type="site" description="Cleavage; by picornain 3C" evidence="9">
    <location>
        <begin position="1862"/>
        <end position="1863"/>
    </location>
</feature>
<feature type="modified residue" description="O-(5'-phospho-RNA)-tyrosine" evidence="4">
    <location>
        <position position="1581"/>
    </location>
</feature>
<feature type="modified residue" description="O-(5'-phospho-RNA)-tyrosine" evidence="4">
    <location>
        <position position="1604"/>
    </location>
</feature>
<feature type="modified residue" description="O-(5'-phospho-RNA)-tyrosine" evidence="4">
    <location>
        <position position="1628"/>
    </location>
</feature>
<feature type="lipid moiety-binding region" description="N-myristoyl glycine; by host" evidence="7">
    <location>
        <position position="202"/>
    </location>
</feature>
<feature type="disulfide bond" description="Interchain; in VP3 dimer" evidence="4">
    <location>
        <position position="511"/>
    </location>
</feature>
<feature type="splice variant" id="VSP_046529" description="In isoform Lb." evidence="14">
    <location>
        <begin position="1"/>
        <end position="28"/>
    </location>
</feature>
<feature type="sequence variant">
    <original>E</original>
    <variation>D</variation>
    <location>
        <position position="746"/>
    </location>
</feature>
<feature type="sequence variant">
    <original>HHT</original>
    <variation>YYM</variation>
    <location>
        <begin position="753"/>
        <end position="755"/>
    </location>
</feature>
<feature type="sequence variant">
    <original>T</original>
    <variation>M</variation>
    <location>
        <position position="871"/>
    </location>
</feature>
<feature type="sequence variant">
    <original>P</original>
    <variation>A</variation>
    <location>
        <position position="874"/>
    </location>
</feature>
<feature type="sequence variant">
    <original>V</original>
    <variation>I</variation>
    <location>
        <position position="894"/>
    </location>
</feature>
<reference key="1">
    <citation type="journal article" date="1983" name="EMBO J.">
        <title>The molecular basis of the antigenic variation of foot-and-mouth disease virus.</title>
        <authorList>
            <person name="Beck E."/>
            <person name="Feil G."/>
            <person name="Strohmaier K."/>
        </authorList>
    </citation>
    <scope>NUCLEOTIDE SEQUENCE [GENOMIC RNA]</scope>
</reference>
<reference key="2">
    <citation type="journal article" date="2005" name="J. Virol.">
        <title>Comparative genomics of foot-and-mouth disease virus.</title>
        <authorList>
            <person name="Carrillo C."/>
            <person name="Tulman E.R."/>
            <person name="Delhon G."/>
            <person name="Lu Z."/>
            <person name="Carreno A."/>
            <person name="Vagnozzi A."/>
            <person name="Kutish G.F."/>
            <person name="Rock D.L."/>
        </authorList>
    </citation>
    <scope>NUCLEOTIDE SEQUENCE [GENOMIC RNA]</scope>
</reference>